<organism>
    <name type="scientific">Cupriavidus taiwanensis (strain DSM 17343 / BCRC 17206 / CCUG 44338 / CIP 107171 / LMG 19424 / R1)</name>
    <name type="common">Ralstonia taiwanensis (strain LMG 19424)</name>
    <dbReference type="NCBI Taxonomy" id="977880"/>
    <lineage>
        <taxon>Bacteria</taxon>
        <taxon>Pseudomonadati</taxon>
        <taxon>Pseudomonadota</taxon>
        <taxon>Betaproteobacteria</taxon>
        <taxon>Burkholderiales</taxon>
        <taxon>Burkholderiaceae</taxon>
        <taxon>Cupriavidus</taxon>
    </lineage>
</organism>
<sequence>MNKIRCALIGPGNIGTDLLYKLRRSDILEPVWMVGVEPTSEGLARARELGLKTTSDGIDGLLPHLEADDIRIAFDATSAYVHAEHSAKLTARGVRVIDLTPAAIGPFCVPPVNLAAHIGSNEMNVNMVTCGGQATIPMVYAVSRVQPVAYGEIVATVSSRSVGPGTRRNIDEFTRTTAGAIEAVGGARQGKAIIVINPAEPPLIMRDTIHCLTEDAPDVAAITASVHDMIAEVRKYVPGYTLKNGPVFDGKRVSIFLEVEGLGDYLPKYAGNLDIMTASAARTAECIAAAMRAGSPETATA</sequence>
<feature type="chain" id="PRO_0000387653" description="Acetaldehyde dehydrogenase">
    <location>
        <begin position="1"/>
        <end position="301"/>
    </location>
</feature>
<feature type="active site" description="Acyl-thioester intermediate" evidence="1">
    <location>
        <position position="130"/>
    </location>
</feature>
<feature type="binding site" evidence="1">
    <location>
        <begin position="161"/>
        <end position="169"/>
    </location>
    <ligand>
        <name>NAD(+)</name>
        <dbReference type="ChEBI" id="CHEBI:57540"/>
    </ligand>
</feature>
<feature type="binding site" evidence="1">
    <location>
        <position position="272"/>
    </location>
    <ligand>
        <name>NAD(+)</name>
        <dbReference type="ChEBI" id="CHEBI:57540"/>
    </ligand>
</feature>
<accession>B2AIJ6</accession>
<dbReference type="EC" id="1.2.1.10" evidence="1"/>
<dbReference type="EMBL" id="CU633750">
    <property type="protein sequence ID" value="CAP63595.1"/>
    <property type="molecule type" value="Genomic_DNA"/>
</dbReference>
<dbReference type="RefSeq" id="WP_012355249.1">
    <property type="nucleotide sequence ID" value="NC_010530.1"/>
</dbReference>
<dbReference type="SMR" id="B2AIJ6"/>
<dbReference type="GeneID" id="29764455"/>
<dbReference type="KEGG" id="cti:RALTA_B0400"/>
<dbReference type="eggNOG" id="COG4569">
    <property type="taxonomic scope" value="Bacteria"/>
</dbReference>
<dbReference type="HOGENOM" id="CLU_062208_0_0_4"/>
<dbReference type="BioCyc" id="CTAI977880:RALTA_RS17695-MONOMER"/>
<dbReference type="Proteomes" id="UP000001692">
    <property type="component" value="Chromosome 2"/>
</dbReference>
<dbReference type="GO" id="GO:0008774">
    <property type="term" value="F:acetaldehyde dehydrogenase (acetylating) activity"/>
    <property type="evidence" value="ECO:0007669"/>
    <property type="project" value="UniProtKB-UniRule"/>
</dbReference>
<dbReference type="GO" id="GO:0051287">
    <property type="term" value="F:NAD binding"/>
    <property type="evidence" value="ECO:0007669"/>
    <property type="project" value="UniProtKB-UniRule"/>
</dbReference>
<dbReference type="GO" id="GO:0009056">
    <property type="term" value="P:catabolic process"/>
    <property type="evidence" value="ECO:0007669"/>
    <property type="project" value="UniProtKB-KW"/>
</dbReference>
<dbReference type="CDD" id="cd23933">
    <property type="entry name" value="ALDH_C"/>
    <property type="match status" value="1"/>
</dbReference>
<dbReference type="Gene3D" id="3.30.360.10">
    <property type="entry name" value="Dihydrodipicolinate Reductase, domain 2"/>
    <property type="match status" value="1"/>
</dbReference>
<dbReference type="Gene3D" id="3.40.50.720">
    <property type="entry name" value="NAD(P)-binding Rossmann-like Domain"/>
    <property type="match status" value="1"/>
</dbReference>
<dbReference type="HAMAP" id="MF_01657">
    <property type="entry name" value="Ac_ald_DH_ac"/>
    <property type="match status" value="1"/>
</dbReference>
<dbReference type="InterPro" id="IPR003361">
    <property type="entry name" value="Acetaldehyde_dehydrogenase"/>
</dbReference>
<dbReference type="InterPro" id="IPR015426">
    <property type="entry name" value="Acetylaldehyde_DH_C"/>
</dbReference>
<dbReference type="InterPro" id="IPR036291">
    <property type="entry name" value="NAD(P)-bd_dom_sf"/>
</dbReference>
<dbReference type="InterPro" id="IPR000534">
    <property type="entry name" value="Semialdehyde_DH_NAD-bd"/>
</dbReference>
<dbReference type="NCBIfam" id="TIGR03215">
    <property type="entry name" value="ac_ald_DH_ac"/>
    <property type="match status" value="1"/>
</dbReference>
<dbReference type="NCBIfam" id="NF006157">
    <property type="entry name" value="PRK08300.1"/>
    <property type="match status" value="1"/>
</dbReference>
<dbReference type="Pfam" id="PF09290">
    <property type="entry name" value="AcetDehyd-dimer"/>
    <property type="match status" value="1"/>
</dbReference>
<dbReference type="PIRSF" id="PIRSF015689">
    <property type="entry name" value="Actaldh_dh_actl"/>
    <property type="match status" value="1"/>
</dbReference>
<dbReference type="SMART" id="SM00859">
    <property type="entry name" value="Semialdhyde_dh"/>
    <property type="match status" value="1"/>
</dbReference>
<dbReference type="SUPFAM" id="SSF55347">
    <property type="entry name" value="Glyceraldehyde-3-phosphate dehydrogenase-like, C-terminal domain"/>
    <property type="match status" value="1"/>
</dbReference>
<dbReference type="SUPFAM" id="SSF51735">
    <property type="entry name" value="NAD(P)-binding Rossmann-fold domains"/>
    <property type="match status" value="1"/>
</dbReference>
<reference key="1">
    <citation type="journal article" date="2008" name="Genome Res.">
        <title>Genome sequence of the beta-rhizobium Cupriavidus taiwanensis and comparative genomics of rhizobia.</title>
        <authorList>
            <person name="Amadou C."/>
            <person name="Pascal G."/>
            <person name="Mangenot S."/>
            <person name="Glew M."/>
            <person name="Bontemps C."/>
            <person name="Capela D."/>
            <person name="Carrere S."/>
            <person name="Cruveiller S."/>
            <person name="Dossat C."/>
            <person name="Lajus A."/>
            <person name="Marchetti M."/>
            <person name="Poinsot V."/>
            <person name="Rouy Z."/>
            <person name="Servin B."/>
            <person name="Saad M."/>
            <person name="Schenowitz C."/>
            <person name="Barbe V."/>
            <person name="Batut J."/>
            <person name="Medigue C."/>
            <person name="Masson-Boivin C."/>
        </authorList>
    </citation>
    <scope>NUCLEOTIDE SEQUENCE [LARGE SCALE GENOMIC DNA]</scope>
    <source>
        <strain>DSM 17343 / BCRC 17206 / CCUG 44338 / CIP 107171 / LMG 19424 / R1</strain>
    </source>
</reference>
<proteinExistence type="inferred from homology"/>
<keyword id="KW-0058">Aromatic hydrocarbons catabolism</keyword>
<keyword id="KW-0520">NAD</keyword>
<keyword id="KW-0560">Oxidoreductase</keyword>
<comment type="catalytic activity">
    <reaction evidence="1">
        <text>acetaldehyde + NAD(+) + CoA = acetyl-CoA + NADH + H(+)</text>
        <dbReference type="Rhea" id="RHEA:23288"/>
        <dbReference type="ChEBI" id="CHEBI:15343"/>
        <dbReference type="ChEBI" id="CHEBI:15378"/>
        <dbReference type="ChEBI" id="CHEBI:57287"/>
        <dbReference type="ChEBI" id="CHEBI:57288"/>
        <dbReference type="ChEBI" id="CHEBI:57540"/>
        <dbReference type="ChEBI" id="CHEBI:57945"/>
        <dbReference type="EC" id="1.2.1.10"/>
    </reaction>
</comment>
<comment type="similarity">
    <text evidence="1">Belongs to the acetaldehyde dehydrogenase family.</text>
</comment>
<name>ACDH_CUPTR</name>
<gene>
    <name type="primary">mhpF</name>
    <name type="ordered locus">RALTA_B0400</name>
</gene>
<protein>
    <recommendedName>
        <fullName evidence="1">Acetaldehyde dehydrogenase</fullName>
        <ecNumber evidence="1">1.2.1.10</ecNumber>
    </recommendedName>
    <alternativeName>
        <fullName evidence="1">Acetaldehyde dehydrogenase [acetylating]</fullName>
    </alternativeName>
</protein>
<evidence type="ECO:0000255" key="1">
    <source>
        <dbReference type="HAMAP-Rule" id="MF_01657"/>
    </source>
</evidence>